<protein>
    <recommendedName>
        <fullName evidence="2">Nucleoside diphosphate kinase</fullName>
        <shortName evidence="2">NDK</shortName>
        <shortName evidence="2">NDP kinase</shortName>
        <ecNumber evidence="2">2.7.4.6</ecNumber>
    </recommendedName>
    <alternativeName>
        <fullName evidence="2">Nucleoside-2-P kinase</fullName>
    </alternativeName>
</protein>
<name>NDK_MYCTO</name>
<dbReference type="EC" id="2.7.4.6" evidence="2"/>
<dbReference type="EMBL" id="AE000516">
    <property type="protein sequence ID" value="AAK46820.1"/>
    <property type="molecule type" value="Genomic_DNA"/>
</dbReference>
<dbReference type="PIR" id="C70681">
    <property type="entry name" value="C70681"/>
</dbReference>
<dbReference type="RefSeq" id="WP_003412592.1">
    <property type="nucleotide sequence ID" value="NZ_KK341227.1"/>
</dbReference>
<dbReference type="SMR" id="P9WJH6"/>
<dbReference type="GeneID" id="45426435"/>
<dbReference type="KEGG" id="mtc:MT2521"/>
<dbReference type="PATRIC" id="fig|83331.31.peg.2720"/>
<dbReference type="HOGENOM" id="CLU_060216_6_3_11"/>
<dbReference type="Proteomes" id="UP000001020">
    <property type="component" value="Chromosome"/>
</dbReference>
<dbReference type="GO" id="GO:0005737">
    <property type="term" value="C:cytoplasm"/>
    <property type="evidence" value="ECO:0007669"/>
    <property type="project" value="UniProtKB-SubCell"/>
</dbReference>
<dbReference type="GO" id="GO:0005524">
    <property type="term" value="F:ATP binding"/>
    <property type="evidence" value="ECO:0007669"/>
    <property type="project" value="UniProtKB-UniRule"/>
</dbReference>
<dbReference type="GO" id="GO:0046872">
    <property type="term" value="F:metal ion binding"/>
    <property type="evidence" value="ECO:0007669"/>
    <property type="project" value="UniProtKB-KW"/>
</dbReference>
<dbReference type="GO" id="GO:0004550">
    <property type="term" value="F:nucleoside diphosphate kinase activity"/>
    <property type="evidence" value="ECO:0007669"/>
    <property type="project" value="UniProtKB-UniRule"/>
</dbReference>
<dbReference type="GO" id="GO:0006241">
    <property type="term" value="P:CTP biosynthetic process"/>
    <property type="evidence" value="ECO:0007669"/>
    <property type="project" value="UniProtKB-UniRule"/>
</dbReference>
<dbReference type="GO" id="GO:0006183">
    <property type="term" value="P:GTP biosynthetic process"/>
    <property type="evidence" value="ECO:0007669"/>
    <property type="project" value="UniProtKB-UniRule"/>
</dbReference>
<dbReference type="GO" id="GO:0006228">
    <property type="term" value="P:UTP biosynthetic process"/>
    <property type="evidence" value="ECO:0007669"/>
    <property type="project" value="UniProtKB-UniRule"/>
</dbReference>
<dbReference type="CDD" id="cd04413">
    <property type="entry name" value="NDPk_I"/>
    <property type="match status" value="1"/>
</dbReference>
<dbReference type="FunFam" id="3.30.70.141:FF:000003">
    <property type="entry name" value="Nucleoside diphosphate kinase"/>
    <property type="match status" value="1"/>
</dbReference>
<dbReference type="Gene3D" id="3.30.70.141">
    <property type="entry name" value="Nucleoside diphosphate kinase-like domain"/>
    <property type="match status" value="1"/>
</dbReference>
<dbReference type="HAMAP" id="MF_00451">
    <property type="entry name" value="NDP_kinase"/>
    <property type="match status" value="1"/>
</dbReference>
<dbReference type="InterPro" id="IPR034907">
    <property type="entry name" value="NDK-like_dom"/>
</dbReference>
<dbReference type="InterPro" id="IPR036850">
    <property type="entry name" value="NDK-like_dom_sf"/>
</dbReference>
<dbReference type="InterPro" id="IPR001564">
    <property type="entry name" value="Nucleoside_diP_kinase"/>
</dbReference>
<dbReference type="NCBIfam" id="NF001908">
    <property type="entry name" value="PRK00668.1"/>
    <property type="match status" value="1"/>
</dbReference>
<dbReference type="PANTHER" id="PTHR11349">
    <property type="entry name" value="NUCLEOSIDE DIPHOSPHATE KINASE"/>
    <property type="match status" value="1"/>
</dbReference>
<dbReference type="Pfam" id="PF00334">
    <property type="entry name" value="NDK"/>
    <property type="match status" value="1"/>
</dbReference>
<dbReference type="PRINTS" id="PR01243">
    <property type="entry name" value="NUCDPKINASE"/>
</dbReference>
<dbReference type="SMART" id="SM00562">
    <property type="entry name" value="NDK"/>
    <property type="match status" value="1"/>
</dbReference>
<dbReference type="SUPFAM" id="SSF54919">
    <property type="entry name" value="Nucleoside diphosphate kinase, NDK"/>
    <property type="match status" value="1"/>
</dbReference>
<dbReference type="PROSITE" id="PS51374">
    <property type="entry name" value="NDPK_LIKE"/>
    <property type="match status" value="1"/>
</dbReference>
<accession>P9WJH6</accession>
<accession>L0TCD2</accession>
<accession>P71904</accession>
<accession>P84284</accession>
<keyword id="KW-0067">ATP-binding</keyword>
<keyword id="KW-0963">Cytoplasm</keyword>
<keyword id="KW-0418">Kinase</keyword>
<keyword id="KW-0460">Magnesium</keyword>
<keyword id="KW-0479">Metal-binding</keyword>
<keyword id="KW-0546">Nucleotide metabolism</keyword>
<keyword id="KW-0547">Nucleotide-binding</keyword>
<keyword id="KW-0597">Phosphoprotein</keyword>
<keyword id="KW-1185">Reference proteome</keyword>
<keyword id="KW-0808">Transferase</keyword>
<sequence>MTERTLVLIKPDGIERQLIGEIISRIERKGLTIAALQLRTVSAELASQHYAEHEGKPFFGSLLEFITSGPVVAAIVEGTRAIAAVRQLAGGTDPVQAAAPGTIRGDFALETQFNLVHGSDSAESAQREIALWFPGA</sequence>
<evidence type="ECO:0000250" key="1"/>
<evidence type="ECO:0000255" key="2">
    <source>
        <dbReference type="HAMAP-Rule" id="MF_00451"/>
    </source>
</evidence>
<evidence type="ECO:0000305" key="3"/>
<proteinExistence type="inferred from homology"/>
<reference key="1">
    <citation type="journal article" date="2002" name="J. Bacteriol.">
        <title>Whole-genome comparison of Mycobacterium tuberculosis clinical and laboratory strains.</title>
        <authorList>
            <person name="Fleischmann R.D."/>
            <person name="Alland D."/>
            <person name="Eisen J.A."/>
            <person name="Carpenter L."/>
            <person name="White O."/>
            <person name="Peterson J.D."/>
            <person name="DeBoy R.T."/>
            <person name="Dodson R.J."/>
            <person name="Gwinn M.L."/>
            <person name="Haft D.H."/>
            <person name="Hickey E.K."/>
            <person name="Kolonay J.F."/>
            <person name="Nelson W.C."/>
            <person name="Umayam L.A."/>
            <person name="Ermolaeva M.D."/>
            <person name="Salzberg S.L."/>
            <person name="Delcher A."/>
            <person name="Utterback T.R."/>
            <person name="Weidman J.F."/>
            <person name="Khouri H.M."/>
            <person name="Gill J."/>
            <person name="Mikula A."/>
            <person name="Bishai W."/>
            <person name="Jacobs W.R. Jr."/>
            <person name="Venter J.C."/>
            <person name="Fraser C.M."/>
        </authorList>
    </citation>
    <scope>NUCLEOTIDE SEQUENCE [LARGE SCALE GENOMIC DNA]</scope>
    <source>
        <strain>CDC 1551 / Oshkosh</strain>
    </source>
</reference>
<comment type="function">
    <text evidence="2">Major role in the synthesis of nucleoside triphosphates other than ATP. The ATP gamma phosphate is transferred to the NDP beta phosphate via a ping-pong mechanism, using a phosphorylated active-site intermediate.</text>
</comment>
<comment type="catalytic activity">
    <reaction evidence="2">
        <text>a 2'-deoxyribonucleoside 5'-diphosphate + ATP = a 2'-deoxyribonucleoside 5'-triphosphate + ADP</text>
        <dbReference type="Rhea" id="RHEA:44640"/>
        <dbReference type="ChEBI" id="CHEBI:30616"/>
        <dbReference type="ChEBI" id="CHEBI:61560"/>
        <dbReference type="ChEBI" id="CHEBI:73316"/>
        <dbReference type="ChEBI" id="CHEBI:456216"/>
        <dbReference type="EC" id="2.7.4.6"/>
    </reaction>
</comment>
<comment type="catalytic activity">
    <reaction evidence="2">
        <text>a ribonucleoside 5'-diphosphate + ATP = a ribonucleoside 5'-triphosphate + ADP</text>
        <dbReference type="Rhea" id="RHEA:18113"/>
        <dbReference type="ChEBI" id="CHEBI:30616"/>
        <dbReference type="ChEBI" id="CHEBI:57930"/>
        <dbReference type="ChEBI" id="CHEBI:61557"/>
        <dbReference type="ChEBI" id="CHEBI:456216"/>
        <dbReference type="EC" id="2.7.4.6"/>
    </reaction>
</comment>
<comment type="cofactor">
    <cofactor evidence="2">
        <name>Mg(2+)</name>
        <dbReference type="ChEBI" id="CHEBI:18420"/>
    </cofactor>
</comment>
<comment type="subunit">
    <text evidence="1">Homohexamer.</text>
</comment>
<comment type="subcellular location">
    <subcellularLocation>
        <location evidence="2">Cytoplasm</location>
    </subcellularLocation>
</comment>
<comment type="similarity">
    <text evidence="2 3">Belongs to the NDK family.</text>
</comment>
<organism>
    <name type="scientific">Mycobacterium tuberculosis (strain CDC 1551 / Oshkosh)</name>
    <dbReference type="NCBI Taxonomy" id="83331"/>
    <lineage>
        <taxon>Bacteria</taxon>
        <taxon>Bacillati</taxon>
        <taxon>Actinomycetota</taxon>
        <taxon>Actinomycetes</taxon>
        <taxon>Mycobacteriales</taxon>
        <taxon>Mycobacteriaceae</taxon>
        <taxon>Mycobacterium</taxon>
        <taxon>Mycobacterium tuberculosis complex</taxon>
    </lineage>
</organism>
<feature type="chain" id="PRO_0000427828" description="Nucleoside diphosphate kinase">
    <location>
        <begin position="1"/>
        <end position="136"/>
    </location>
</feature>
<feature type="active site" description="Pros-phosphohistidine intermediate" evidence="2">
    <location>
        <position position="117"/>
    </location>
</feature>
<feature type="binding site" evidence="2">
    <location>
        <position position="10"/>
    </location>
    <ligand>
        <name>ATP</name>
        <dbReference type="ChEBI" id="CHEBI:30616"/>
    </ligand>
</feature>
<feature type="binding site" evidence="2">
    <location>
        <position position="58"/>
    </location>
    <ligand>
        <name>ATP</name>
        <dbReference type="ChEBI" id="CHEBI:30616"/>
    </ligand>
</feature>
<feature type="binding site" evidence="2">
    <location>
        <position position="86"/>
    </location>
    <ligand>
        <name>ATP</name>
        <dbReference type="ChEBI" id="CHEBI:30616"/>
    </ligand>
</feature>
<feature type="binding site" evidence="2">
    <location>
        <position position="92"/>
    </location>
    <ligand>
        <name>ATP</name>
        <dbReference type="ChEBI" id="CHEBI:30616"/>
    </ligand>
</feature>
<feature type="binding site" evidence="2">
    <location>
        <position position="104"/>
    </location>
    <ligand>
        <name>ATP</name>
        <dbReference type="ChEBI" id="CHEBI:30616"/>
    </ligand>
</feature>
<feature type="binding site" evidence="2">
    <location>
        <position position="114"/>
    </location>
    <ligand>
        <name>ATP</name>
        <dbReference type="ChEBI" id="CHEBI:30616"/>
    </ligand>
</feature>
<gene>
    <name type="primary">ndkA</name>
    <name type="synonym">ndk</name>
    <name type="ordered locus">MT2521</name>
</gene>